<accession>Q9LY50</accession>
<comment type="function">
    <text>Serine/threonine-protein kinase.</text>
</comment>
<comment type="catalytic activity">
    <reaction>
        <text>L-seryl-[protein] + ATP = O-phospho-L-seryl-[protein] + ADP + H(+)</text>
        <dbReference type="Rhea" id="RHEA:17989"/>
        <dbReference type="Rhea" id="RHEA-COMP:9863"/>
        <dbReference type="Rhea" id="RHEA-COMP:11604"/>
        <dbReference type="ChEBI" id="CHEBI:15378"/>
        <dbReference type="ChEBI" id="CHEBI:29999"/>
        <dbReference type="ChEBI" id="CHEBI:30616"/>
        <dbReference type="ChEBI" id="CHEBI:83421"/>
        <dbReference type="ChEBI" id="CHEBI:456216"/>
        <dbReference type="EC" id="2.7.11.1"/>
    </reaction>
</comment>
<comment type="catalytic activity">
    <reaction>
        <text>L-threonyl-[protein] + ATP = O-phospho-L-threonyl-[protein] + ADP + H(+)</text>
        <dbReference type="Rhea" id="RHEA:46608"/>
        <dbReference type="Rhea" id="RHEA-COMP:11060"/>
        <dbReference type="Rhea" id="RHEA-COMP:11605"/>
        <dbReference type="ChEBI" id="CHEBI:15378"/>
        <dbReference type="ChEBI" id="CHEBI:30013"/>
        <dbReference type="ChEBI" id="CHEBI:30616"/>
        <dbReference type="ChEBI" id="CHEBI:61977"/>
        <dbReference type="ChEBI" id="CHEBI:456216"/>
        <dbReference type="EC" id="2.7.11.1"/>
    </reaction>
</comment>
<comment type="subunit">
    <text>Homodimer.</text>
</comment>
<comment type="subcellular location">
    <subcellularLocation>
        <location evidence="6">Membrane</location>
        <topology evidence="6">Single-pass type I membrane protein</topology>
    </subcellularLocation>
</comment>
<comment type="tissue specificity">
    <text evidence="5">Expressed in roots, leaves, shoot apical meristems (SAM), and floral buds.</text>
</comment>
<comment type="similarity">
    <text evidence="2">Belongs to the protein kinase superfamily. Ser/Thr protein kinase family.</text>
</comment>
<proteinExistence type="evidence at transcript level"/>
<sequence>MKRFINSTVTFSVTVTIAVIIFFLLSPVTSLGSGSTYAVVYGSDTVCALISGQPTQRILCYDTRLNINVTLNPGVSFSSIAAGDNFLCGIRSGGYSLLCWDNIGSYSPNRKRIYQNDNVLLETLSVGDKQICATVNGTNSLKCWRGSVSDQSKPPNERFRSISSGVGFSCGVSIRNNRILCWGTDPVKSNQIQTGFGNTPMVTISAGKSHACGLNTTGNLICIGNNDSGQLNVIAPDQPNLYSSSLSLGSNFTCAMRISNNSVVCWGGGAERFNNVTDSISFESISSGPGLICGLISSNLSIMCWNPTNFSRIFLPFPEVLPGPCVESSSSSLCSCGVYPQSDKLCSGTGSICKSCPIQFPASPPSQFPLPPPPPPPPPSPSTSSPPSKALTRGLLAFAIVGSVGAFAGICSVVYCLWTGVCLGKKKVHNSVQPTITRGGSNSRSNSSNSRSLSIRRQGSRMLSMRRQRSGTSSMKHADKAEEFSFSELASATGNFSLENKIGSGSFGVVYRGKLNDGREVAIKRGEVNAKMKKFQEKETAFDSEIAFLSRLHHKHLVRLVGYCEEREEKLLVYDYMKNGALYDHLHDKNNVEKHSSLINSWKMRIKIALDAARGIEYLHNYAVPPIIHRDIKSSNILLDSNWVARVSDFGLSLMGPVLGKDHNPYQRPTKAAGTVGYIDPEYYSLNVLTDKSDVYGLGVVLLELLTGKRAIFRNNGDVEEEEGCVPVHLVDYSVPAITADELSTILDPRVGSPELGEGDAVELVAYTAMHCVNAEGRNRPTMTDIVGNLERALDLCGDSHGSISSGICSIVSD</sequence>
<reference key="1">
    <citation type="journal article" date="2000" name="Nature">
        <title>Sequence and analysis of chromosome 3 of the plant Arabidopsis thaliana.</title>
        <authorList>
            <person name="Salanoubat M."/>
            <person name="Lemcke K."/>
            <person name="Rieger M."/>
            <person name="Ansorge W."/>
            <person name="Unseld M."/>
            <person name="Fartmann B."/>
            <person name="Valle G."/>
            <person name="Bloecker H."/>
            <person name="Perez-Alonso M."/>
            <person name="Obermaier B."/>
            <person name="Delseny M."/>
            <person name="Boutry M."/>
            <person name="Grivell L.A."/>
            <person name="Mache R."/>
            <person name="Puigdomenech P."/>
            <person name="De Simone V."/>
            <person name="Choisne N."/>
            <person name="Artiguenave F."/>
            <person name="Robert C."/>
            <person name="Brottier P."/>
            <person name="Wincker P."/>
            <person name="Cattolico L."/>
            <person name="Weissenbach J."/>
            <person name="Saurin W."/>
            <person name="Quetier F."/>
            <person name="Schaefer M."/>
            <person name="Mueller-Auer S."/>
            <person name="Gabel C."/>
            <person name="Fuchs M."/>
            <person name="Benes V."/>
            <person name="Wurmbach E."/>
            <person name="Drzonek H."/>
            <person name="Erfle H."/>
            <person name="Jordan N."/>
            <person name="Bangert S."/>
            <person name="Wiedelmann R."/>
            <person name="Kranz H."/>
            <person name="Voss H."/>
            <person name="Holland R."/>
            <person name="Brandt P."/>
            <person name="Nyakatura G."/>
            <person name="Vezzi A."/>
            <person name="D'Angelo M."/>
            <person name="Pallavicini A."/>
            <person name="Toppo S."/>
            <person name="Simionati B."/>
            <person name="Conrad A."/>
            <person name="Hornischer K."/>
            <person name="Kauer G."/>
            <person name="Loehnert T.-H."/>
            <person name="Nordsiek G."/>
            <person name="Reichelt J."/>
            <person name="Scharfe M."/>
            <person name="Schoen O."/>
            <person name="Bargues M."/>
            <person name="Terol J."/>
            <person name="Climent J."/>
            <person name="Navarro P."/>
            <person name="Collado C."/>
            <person name="Perez-Perez A."/>
            <person name="Ottenwaelder B."/>
            <person name="Duchemin D."/>
            <person name="Cooke R."/>
            <person name="Laudie M."/>
            <person name="Berger-Llauro C."/>
            <person name="Purnelle B."/>
            <person name="Masuy D."/>
            <person name="de Haan M."/>
            <person name="Maarse A.C."/>
            <person name="Alcaraz J.-P."/>
            <person name="Cottet A."/>
            <person name="Casacuberta E."/>
            <person name="Monfort A."/>
            <person name="Argiriou A."/>
            <person name="Flores M."/>
            <person name="Liguori R."/>
            <person name="Vitale D."/>
            <person name="Mannhaupt G."/>
            <person name="Haase D."/>
            <person name="Schoof H."/>
            <person name="Rudd S."/>
            <person name="Zaccaria P."/>
            <person name="Mewes H.-W."/>
            <person name="Mayer K.F.X."/>
            <person name="Kaul S."/>
            <person name="Town C.D."/>
            <person name="Koo H.L."/>
            <person name="Tallon L.J."/>
            <person name="Jenkins J."/>
            <person name="Rooney T."/>
            <person name="Rizzo M."/>
            <person name="Walts A."/>
            <person name="Utterback T."/>
            <person name="Fujii C.Y."/>
            <person name="Shea T.P."/>
            <person name="Creasy T.H."/>
            <person name="Haas B."/>
            <person name="Maiti R."/>
            <person name="Wu D."/>
            <person name="Peterson J."/>
            <person name="Van Aken S."/>
            <person name="Pai G."/>
            <person name="Militscher J."/>
            <person name="Sellers P."/>
            <person name="Gill J.E."/>
            <person name="Feldblyum T.V."/>
            <person name="Preuss D."/>
            <person name="Lin X."/>
            <person name="Nierman W.C."/>
            <person name="Salzberg S.L."/>
            <person name="White O."/>
            <person name="Venter J.C."/>
            <person name="Fraser C.M."/>
            <person name="Kaneko T."/>
            <person name="Nakamura Y."/>
            <person name="Sato S."/>
            <person name="Kato T."/>
            <person name="Asamizu E."/>
            <person name="Sasamoto S."/>
            <person name="Kimura T."/>
            <person name="Idesawa K."/>
            <person name="Kawashima K."/>
            <person name="Kishida Y."/>
            <person name="Kiyokawa C."/>
            <person name="Kohara M."/>
            <person name="Matsumoto M."/>
            <person name="Matsuno A."/>
            <person name="Muraki A."/>
            <person name="Nakayama S."/>
            <person name="Nakazaki N."/>
            <person name="Shinpo S."/>
            <person name="Takeuchi C."/>
            <person name="Wada T."/>
            <person name="Watanabe A."/>
            <person name="Yamada M."/>
            <person name="Yasuda M."/>
            <person name="Tabata S."/>
        </authorList>
    </citation>
    <scope>NUCLEOTIDE SEQUENCE [LARGE SCALE GENOMIC DNA]</scope>
    <source>
        <strain>cv. Columbia</strain>
    </source>
</reference>
<reference key="2">
    <citation type="journal article" date="2017" name="Plant J.">
        <title>Araport11: a complete reannotation of the Arabidopsis thaliana reference genome.</title>
        <authorList>
            <person name="Cheng C.Y."/>
            <person name="Krishnakumar V."/>
            <person name="Chan A.P."/>
            <person name="Thibaud-Nissen F."/>
            <person name="Schobel S."/>
            <person name="Town C.D."/>
        </authorList>
    </citation>
    <scope>GENOME REANNOTATION</scope>
    <source>
        <strain>cv. Columbia</strain>
    </source>
</reference>
<reference key="3">
    <citation type="journal article" date="2005" name="Planta">
        <title>Molecular analysis of the CRINKLY4 gene family in Arabidopsis thaliana.</title>
        <authorList>
            <person name="Cao X."/>
            <person name="Li K."/>
            <person name="Suh S.-G."/>
            <person name="Guo T."/>
            <person name="Becraft P.W."/>
        </authorList>
    </citation>
    <scope>GENE FAMILY</scope>
    <scope>TISSUE SPECIFICITY</scope>
</reference>
<reference key="4">
    <citation type="journal article" date="2008" name="Arch. Biochem. Biophys.">
        <title>Dimerization properties of the transmembrane domains of Arabidopsis CRINKLY4 receptor-like kinase and homologs.</title>
        <authorList>
            <person name="Stokes K.D."/>
            <person name="Gururaj Rao A."/>
        </authorList>
    </citation>
    <scope>HOMODIMERIZATION</scope>
</reference>
<reference key="5">
    <citation type="journal article" date="2009" name="Mol. Plant">
        <title>Diverse transcriptional programs associated with environmental stress and hormones in the Arabidopsis receptor-like kinase gene family.</title>
        <authorList>
            <person name="Chae L."/>
            <person name="Sudat S."/>
            <person name="Dudoit S."/>
            <person name="Zhu T."/>
            <person name="Luan S."/>
        </authorList>
    </citation>
    <scope>GENE FAMILY</scope>
</reference>
<keyword id="KW-0067">ATP-binding</keyword>
<keyword id="KW-0325">Glycoprotein</keyword>
<keyword id="KW-0418">Kinase</keyword>
<keyword id="KW-0472">Membrane</keyword>
<keyword id="KW-0547">Nucleotide-binding</keyword>
<keyword id="KW-0675">Receptor</keyword>
<keyword id="KW-1185">Reference proteome</keyword>
<keyword id="KW-0723">Serine/threonine-protein kinase</keyword>
<keyword id="KW-0732">Signal</keyword>
<keyword id="KW-0808">Transferase</keyword>
<keyword id="KW-0812">Transmembrane</keyword>
<keyword id="KW-1133">Transmembrane helix</keyword>
<evidence type="ECO:0000255" key="1"/>
<evidence type="ECO:0000255" key="2">
    <source>
        <dbReference type="PROSITE-ProRule" id="PRU00159"/>
    </source>
</evidence>
<evidence type="ECO:0000255" key="3">
    <source>
        <dbReference type="PROSITE-ProRule" id="PRU10027"/>
    </source>
</evidence>
<evidence type="ECO:0000256" key="4">
    <source>
        <dbReference type="SAM" id="MobiDB-lite"/>
    </source>
</evidence>
<evidence type="ECO:0000269" key="5">
    <source>
    </source>
</evidence>
<evidence type="ECO:0000305" key="6"/>
<protein>
    <recommendedName>
        <fullName>Putative serine/threonine-protein kinase-like protein CCR3</fullName>
        <ecNumber>2.7.11.1</ecNumber>
    </recommendedName>
    <alternativeName>
        <fullName>Protein CRINKLY 4 RELATED 3</fullName>
        <shortName>AtCRR3</shortName>
    </alternativeName>
</protein>
<organism>
    <name type="scientific">Arabidopsis thaliana</name>
    <name type="common">Mouse-ear cress</name>
    <dbReference type="NCBI Taxonomy" id="3702"/>
    <lineage>
        <taxon>Eukaryota</taxon>
        <taxon>Viridiplantae</taxon>
        <taxon>Streptophyta</taxon>
        <taxon>Embryophyta</taxon>
        <taxon>Tracheophyta</taxon>
        <taxon>Spermatophyta</taxon>
        <taxon>Magnoliopsida</taxon>
        <taxon>eudicotyledons</taxon>
        <taxon>Gunneridae</taxon>
        <taxon>Pentapetalae</taxon>
        <taxon>rosids</taxon>
        <taxon>malvids</taxon>
        <taxon>Brassicales</taxon>
        <taxon>Brassicaceae</taxon>
        <taxon>Camelineae</taxon>
        <taxon>Arabidopsis</taxon>
    </lineage>
</organism>
<dbReference type="EC" id="2.7.11.1"/>
<dbReference type="EMBL" id="AL163832">
    <property type="protein sequence ID" value="CAB87849.1"/>
    <property type="molecule type" value="Genomic_DNA"/>
</dbReference>
<dbReference type="EMBL" id="CP002686">
    <property type="protein sequence ID" value="AEE79460.1"/>
    <property type="molecule type" value="Genomic_DNA"/>
</dbReference>
<dbReference type="PIR" id="T49207">
    <property type="entry name" value="T49207"/>
</dbReference>
<dbReference type="RefSeq" id="NP_191154.1">
    <property type="nucleotide sequence ID" value="NM_115453.3"/>
</dbReference>
<dbReference type="SMR" id="Q9LY50"/>
<dbReference type="BioGRID" id="10077">
    <property type="interactions" value="1"/>
</dbReference>
<dbReference type="FunCoup" id="Q9LY50">
    <property type="interactions" value="212"/>
</dbReference>
<dbReference type="IntAct" id="Q9LY50">
    <property type="interactions" value="1"/>
</dbReference>
<dbReference type="STRING" id="3702.Q9LY50"/>
<dbReference type="GlyCosmos" id="Q9LY50">
    <property type="glycosylation" value="10 sites, No reported glycans"/>
</dbReference>
<dbReference type="GlyGen" id="Q9LY50">
    <property type="glycosylation" value="10 sites"/>
</dbReference>
<dbReference type="iPTMnet" id="Q9LY50"/>
<dbReference type="PaxDb" id="3702-AT3G55950.1"/>
<dbReference type="ProteomicsDB" id="243303"/>
<dbReference type="EnsemblPlants" id="AT3G55950.1">
    <property type="protein sequence ID" value="AT3G55950.1"/>
    <property type="gene ID" value="AT3G55950"/>
</dbReference>
<dbReference type="GeneID" id="824761"/>
<dbReference type="Gramene" id="AT3G55950.1">
    <property type="protein sequence ID" value="AT3G55950.1"/>
    <property type="gene ID" value="AT3G55950"/>
</dbReference>
<dbReference type="KEGG" id="ath:AT3G55950"/>
<dbReference type="Araport" id="AT3G55950"/>
<dbReference type="TAIR" id="AT3G55950">
    <property type="gene designation" value="CCR3"/>
</dbReference>
<dbReference type="eggNOG" id="KOG1187">
    <property type="taxonomic scope" value="Eukaryota"/>
</dbReference>
<dbReference type="HOGENOM" id="CLU_009948_1_1_1"/>
<dbReference type="InParanoid" id="Q9LY50"/>
<dbReference type="OMA" id="DLCGDSH"/>
<dbReference type="PhylomeDB" id="Q9LY50"/>
<dbReference type="PRO" id="PR:Q9LY50"/>
<dbReference type="Proteomes" id="UP000006548">
    <property type="component" value="Chromosome 3"/>
</dbReference>
<dbReference type="ExpressionAtlas" id="Q9LY50">
    <property type="expression patterns" value="baseline and differential"/>
</dbReference>
<dbReference type="GO" id="GO:0016020">
    <property type="term" value="C:membrane"/>
    <property type="evidence" value="ECO:0007669"/>
    <property type="project" value="UniProtKB-SubCell"/>
</dbReference>
<dbReference type="GO" id="GO:0005524">
    <property type="term" value="F:ATP binding"/>
    <property type="evidence" value="ECO:0007669"/>
    <property type="project" value="UniProtKB-KW"/>
</dbReference>
<dbReference type="GO" id="GO:0042803">
    <property type="term" value="F:protein homodimerization activity"/>
    <property type="evidence" value="ECO:0000314"/>
    <property type="project" value="UniProtKB"/>
</dbReference>
<dbReference type="GO" id="GO:0106310">
    <property type="term" value="F:protein serine kinase activity"/>
    <property type="evidence" value="ECO:0007669"/>
    <property type="project" value="RHEA"/>
</dbReference>
<dbReference type="GO" id="GO:0004674">
    <property type="term" value="F:protein serine/threonine kinase activity"/>
    <property type="evidence" value="ECO:0007669"/>
    <property type="project" value="UniProtKB-KW"/>
</dbReference>
<dbReference type="FunFam" id="2.130.10.30:FF:000105">
    <property type="match status" value="1"/>
</dbReference>
<dbReference type="FunFam" id="3.30.200.20:FF:000357">
    <property type="entry name" value="serine/threonine-protein kinase-like protein CCR1"/>
    <property type="match status" value="1"/>
</dbReference>
<dbReference type="FunFam" id="1.10.510.10:FF:000569">
    <property type="entry name" value="Serine/threonine-protein kinase-like protein CCR4"/>
    <property type="match status" value="1"/>
</dbReference>
<dbReference type="Gene3D" id="3.30.200.20">
    <property type="entry name" value="Phosphorylase Kinase, domain 1"/>
    <property type="match status" value="1"/>
</dbReference>
<dbReference type="Gene3D" id="2.130.10.30">
    <property type="entry name" value="Regulator of chromosome condensation 1/beta-lactamase-inhibitor protein II"/>
    <property type="match status" value="2"/>
</dbReference>
<dbReference type="Gene3D" id="1.10.510.10">
    <property type="entry name" value="Transferase(Phosphotransferase) domain 1"/>
    <property type="match status" value="1"/>
</dbReference>
<dbReference type="InterPro" id="IPR011009">
    <property type="entry name" value="Kinase-like_dom_sf"/>
</dbReference>
<dbReference type="InterPro" id="IPR000719">
    <property type="entry name" value="Prot_kinase_dom"/>
</dbReference>
<dbReference type="InterPro" id="IPR017441">
    <property type="entry name" value="Protein_kinase_ATP_BS"/>
</dbReference>
<dbReference type="InterPro" id="IPR009091">
    <property type="entry name" value="RCC1/BLIP-II"/>
</dbReference>
<dbReference type="InterPro" id="IPR008271">
    <property type="entry name" value="Ser/Thr_kinase_AS"/>
</dbReference>
<dbReference type="PANTHER" id="PTHR46146">
    <property type="entry name" value="SERINE/THREONINE-PROTEIN KINASE-LIKE PROTEIN CCR4"/>
    <property type="match status" value="1"/>
</dbReference>
<dbReference type="PANTHER" id="PTHR46146:SF3">
    <property type="entry name" value="SERINE_THREONINE-PROTEIN KINASE-LIKE PROTEIN CCR3-RELATED"/>
    <property type="match status" value="1"/>
</dbReference>
<dbReference type="Pfam" id="PF00069">
    <property type="entry name" value="Pkinase"/>
    <property type="match status" value="1"/>
</dbReference>
<dbReference type="Pfam" id="PF13540">
    <property type="entry name" value="RCC1_2"/>
    <property type="match status" value="1"/>
</dbReference>
<dbReference type="SMART" id="SM00220">
    <property type="entry name" value="S_TKc"/>
    <property type="match status" value="1"/>
</dbReference>
<dbReference type="SUPFAM" id="SSF56112">
    <property type="entry name" value="Protein kinase-like (PK-like)"/>
    <property type="match status" value="1"/>
</dbReference>
<dbReference type="SUPFAM" id="SSF50985">
    <property type="entry name" value="RCC1/BLIP-II"/>
    <property type="match status" value="1"/>
</dbReference>
<dbReference type="PROSITE" id="PS00107">
    <property type="entry name" value="PROTEIN_KINASE_ATP"/>
    <property type="match status" value="1"/>
</dbReference>
<dbReference type="PROSITE" id="PS50011">
    <property type="entry name" value="PROTEIN_KINASE_DOM"/>
    <property type="match status" value="1"/>
</dbReference>
<dbReference type="PROSITE" id="PS00108">
    <property type="entry name" value="PROTEIN_KINASE_ST"/>
    <property type="match status" value="1"/>
</dbReference>
<feature type="signal peptide" evidence="1">
    <location>
        <begin position="1"/>
        <end position="30"/>
    </location>
</feature>
<feature type="chain" id="PRO_0000382748" description="Putative serine/threonine-protein kinase-like protein CCR3">
    <location>
        <begin position="31"/>
        <end position="814"/>
    </location>
</feature>
<feature type="topological domain" description="Extracellular" evidence="1">
    <location>
        <begin position="31"/>
        <end position="393"/>
    </location>
</feature>
<feature type="transmembrane region" description="Helical" evidence="1">
    <location>
        <begin position="394"/>
        <end position="414"/>
    </location>
</feature>
<feature type="topological domain" description="Cytoplasmic" evidence="1">
    <location>
        <begin position="415"/>
        <end position="814"/>
    </location>
</feature>
<feature type="domain" description="Protein kinase" evidence="2">
    <location>
        <begin position="496"/>
        <end position="794"/>
    </location>
</feature>
<feature type="region of interest" description="Disordered" evidence="4">
    <location>
        <begin position="366"/>
        <end position="388"/>
    </location>
</feature>
<feature type="region of interest" description="Disordered" evidence="4">
    <location>
        <begin position="433"/>
        <end position="478"/>
    </location>
</feature>
<feature type="compositionally biased region" description="Pro residues" evidence="4">
    <location>
        <begin position="366"/>
        <end position="381"/>
    </location>
</feature>
<feature type="compositionally biased region" description="Low complexity" evidence="4">
    <location>
        <begin position="441"/>
        <end position="457"/>
    </location>
</feature>
<feature type="active site" description="Proton acceptor" evidence="2 3">
    <location>
        <position position="631"/>
    </location>
</feature>
<feature type="binding site" evidence="2">
    <location>
        <begin position="502"/>
        <end position="510"/>
    </location>
    <ligand>
        <name>ATP</name>
        <dbReference type="ChEBI" id="CHEBI:30616"/>
    </ligand>
</feature>
<feature type="binding site" evidence="2">
    <location>
        <position position="524"/>
    </location>
    <ligand>
        <name>ATP</name>
        <dbReference type="ChEBI" id="CHEBI:30616"/>
    </ligand>
</feature>
<feature type="glycosylation site" description="N-linked (GlcNAc...) asparagine" evidence="1">
    <location>
        <position position="6"/>
    </location>
</feature>
<feature type="glycosylation site" description="N-linked (GlcNAc...) asparagine" evidence="1">
    <location>
        <position position="68"/>
    </location>
</feature>
<feature type="glycosylation site" description="N-linked (GlcNAc...) asparagine" evidence="1">
    <location>
        <position position="136"/>
    </location>
</feature>
<feature type="glycosylation site" description="N-linked (GlcNAc...) asparagine" evidence="1">
    <location>
        <position position="215"/>
    </location>
</feature>
<feature type="glycosylation site" description="N-linked (GlcNAc...) asparagine" evidence="1">
    <location>
        <position position="226"/>
    </location>
</feature>
<feature type="glycosylation site" description="N-linked (GlcNAc...) asparagine" evidence="1">
    <location>
        <position position="251"/>
    </location>
</feature>
<feature type="glycosylation site" description="N-linked (GlcNAc...) asparagine" evidence="1">
    <location>
        <position position="260"/>
    </location>
</feature>
<feature type="glycosylation site" description="N-linked (GlcNAc...) asparagine" evidence="1">
    <location>
        <position position="275"/>
    </location>
</feature>
<feature type="glycosylation site" description="N-linked (GlcNAc...) asparagine" evidence="1">
    <location>
        <position position="299"/>
    </location>
</feature>
<feature type="glycosylation site" description="N-linked (GlcNAc...) asparagine" evidence="1">
    <location>
        <position position="309"/>
    </location>
</feature>
<gene>
    <name type="primary">CCR3</name>
    <name type="synonym">CRR3</name>
    <name type="ordered locus">At3g55950</name>
    <name type="ORF">F27K19.130</name>
</gene>
<name>ACCR3_ARATH</name>